<sequence>MPQNEYIELHRKRYGYRLDYHEKKRKKEGREAHERSKKAKKMIGLKAKLYHKQRHAEKIQMKKTIKMHEKRNTKQKNDEKTPQGAVPAYLLDREGQSRAKVLSNMIKQKRKEKAGKWEVPLPKVRAQGETEVLKVIRTGKRKKKAWKRMVTKVCFVGDGFTRKPPKYERFIRPMGLRFKKAHVTHPELKATFCLPILGVKKNPSSPLYTTLGVITKGTVIEVNVSELGLVTQGGKVIWGKYAQVTNNPENDGCINAVLLV</sequence>
<gene>
    <name type="primary">NSA2</name>
    <name type="synonym">TINP1</name>
</gene>
<dbReference type="EMBL" id="BC104563">
    <property type="protein sequence ID" value="AAI04564.1"/>
    <property type="molecule type" value="mRNA"/>
</dbReference>
<dbReference type="RefSeq" id="NP_001029718.1">
    <property type="nucleotide sequence ID" value="NM_001034546.2"/>
</dbReference>
<dbReference type="SMR" id="Q3SX11"/>
<dbReference type="FunCoup" id="Q3SX11">
    <property type="interactions" value="3694"/>
</dbReference>
<dbReference type="STRING" id="9913.ENSBTAP00000003989"/>
<dbReference type="PaxDb" id="9913-ENSBTAP00000003989"/>
<dbReference type="Ensembl" id="ENSBTAT00000003989.3">
    <property type="protein sequence ID" value="ENSBTAP00000003989.2"/>
    <property type="gene ID" value="ENSBTAG00000003066.4"/>
</dbReference>
<dbReference type="GeneID" id="522309"/>
<dbReference type="KEGG" id="bta:522309"/>
<dbReference type="CTD" id="10412"/>
<dbReference type="VEuPathDB" id="HostDB:ENSBTAG00000003066"/>
<dbReference type="VGNC" id="VGNC:112710">
    <property type="gene designation" value="NSA2"/>
</dbReference>
<dbReference type="eggNOG" id="KOG3163">
    <property type="taxonomic scope" value="Eukaryota"/>
</dbReference>
<dbReference type="GeneTree" id="ENSGT00390000018706"/>
<dbReference type="HOGENOM" id="CLU_1070048_0_0_1"/>
<dbReference type="InParanoid" id="Q3SX11"/>
<dbReference type="OMA" id="TNTPEND"/>
<dbReference type="OrthoDB" id="1847590at2759"/>
<dbReference type="TreeFam" id="TF300766"/>
<dbReference type="Proteomes" id="UP000009136">
    <property type="component" value="Chromosome 20"/>
</dbReference>
<dbReference type="Bgee" id="ENSBTAG00000003066">
    <property type="expression patterns" value="Expressed in myometrium and 103 other cell types or tissues"/>
</dbReference>
<dbReference type="GO" id="GO:0005730">
    <property type="term" value="C:nucleolus"/>
    <property type="evidence" value="ECO:0007669"/>
    <property type="project" value="UniProtKB-SubCell"/>
</dbReference>
<dbReference type="GO" id="GO:0030687">
    <property type="term" value="C:preribosome, large subunit precursor"/>
    <property type="evidence" value="ECO:0000318"/>
    <property type="project" value="GO_Central"/>
</dbReference>
<dbReference type="GO" id="GO:0000460">
    <property type="term" value="P:maturation of 5.8S rRNA"/>
    <property type="evidence" value="ECO:0000318"/>
    <property type="project" value="GO_Central"/>
</dbReference>
<dbReference type="GO" id="GO:0000470">
    <property type="term" value="P:maturation of LSU-rRNA"/>
    <property type="evidence" value="ECO:0000318"/>
    <property type="project" value="GO_Central"/>
</dbReference>
<dbReference type="CDD" id="cd11381">
    <property type="entry name" value="NSA2"/>
    <property type="match status" value="1"/>
</dbReference>
<dbReference type="FunFam" id="2.40.10.310:FF:000001">
    <property type="entry name" value="NSA2, ribosome biogenesis homolog"/>
    <property type="match status" value="1"/>
</dbReference>
<dbReference type="Gene3D" id="2.40.10.310">
    <property type="match status" value="1"/>
</dbReference>
<dbReference type="InterPro" id="IPR039411">
    <property type="entry name" value="NSA2_fam"/>
</dbReference>
<dbReference type="InterPro" id="IPR022309">
    <property type="entry name" value="Ribosomal_Se8/biogenesis_NSA2"/>
</dbReference>
<dbReference type="PANTHER" id="PTHR12642">
    <property type="entry name" value="RIBOSOME BIOGENESIS PROTEIN NSA2 HOMOLOG"/>
    <property type="match status" value="1"/>
</dbReference>
<dbReference type="Pfam" id="PF01201">
    <property type="entry name" value="Ribosomal_S8e"/>
    <property type="match status" value="1"/>
</dbReference>
<comment type="function">
    <text evidence="1">Involved in the biogenesis of the 60S ribosomal subunit. May play a part in the quality control of pre-60S particles (By similarity).</text>
</comment>
<comment type="subunit">
    <text evidence="1">Component of the pre-66S ribosomal particle.</text>
</comment>
<comment type="subcellular location">
    <subcellularLocation>
        <location evidence="1">Nucleus</location>
        <location evidence="1">Nucleolus</location>
    </subcellularLocation>
</comment>
<comment type="similarity">
    <text evidence="5">Belongs to the eukaryotic ribosomal protein eS8 family. Ribosome biogenesis protein NSA2 subfamily.</text>
</comment>
<accession>Q3SX11</accession>
<protein>
    <recommendedName>
        <fullName>Ribosome biogenesis protein NSA2 homolog</fullName>
    </recommendedName>
    <alternativeName>
        <fullName>TGF-beta-inducible nuclear protein 1</fullName>
    </alternativeName>
</protein>
<organism>
    <name type="scientific">Bos taurus</name>
    <name type="common">Bovine</name>
    <dbReference type="NCBI Taxonomy" id="9913"/>
    <lineage>
        <taxon>Eukaryota</taxon>
        <taxon>Metazoa</taxon>
        <taxon>Chordata</taxon>
        <taxon>Craniata</taxon>
        <taxon>Vertebrata</taxon>
        <taxon>Euteleostomi</taxon>
        <taxon>Mammalia</taxon>
        <taxon>Eutheria</taxon>
        <taxon>Laurasiatheria</taxon>
        <taxon>Artiodactyla</taxon>
        <taxon>Ruminantia</taxon>
        <taxon>Pecora</taxon>
        <taxon>Bovidae</taxon>
        <taxon>Bovinae</taxon>
        <taxon>Bos</taxon>
    </lineage>
</organism>
<feature type="chain" id="PRO_0000231007" description="Ribosome biogenesis protein NSA2 homolog">
    <location>
        <begin position="1"/>
        <end position="260"/>
    </location>
</feature>
<feature type="region of interest" description="Disordered" evidence="4">
    <location>
        <begin position="20"/>
        <end position="41"/>
    </location>
</feature>
<feature type="short sequence motif" description="Nuclear localization signal" evidence="3">
    <location>
        <begin position="11"/>
        <end position="18"/>
    </location>
</feature>
<feature type="compositionally biased region" description="Basic and acidic residues" evidence="4">
    <location>
        <begin position="20"/>
        <end position="34"/>
    </location>
</feature>
<feature type="modified residue" description="Phosphothreonine" evidence="2">
    <location>
        <position position="81"/>
    </location>
</feature>
<feature type="cross-link" description="Glycyl lysine isopeptide (Lys-Gly) (interchain with G-Cter in SUMO2)" evidence="2">
    <location>
        <position position="80"/>
    </location>
</feature>
<name>NSA2_BOVIN</name>
<keyword id="KW-1017">Isopeptide bond</keyword>
<keyword id="KW-0539">Nucleus</keyword>
<keyword id="KW-0597">Phosphoprotein</keyword>
<keyword id="KW-1185">Reference proteome</keyword>
<keyword id="KW-0687">Ribonucleoprotein</keyword>
<keyword id="KW-0690">Ribosome biogenesis</keyword>
<keyword id="KW-0698">rRNA processing</keyword>
<keyword id="KW-0832">Ubl conjugation</keyword>
<reference key="1">
    <citation type="submission" date="2005-09" db="EMBL/GenBank/DDBJ databases">
        <authorList>
            <consortium name="NIH - Mammalian Gene Collection (MGC) project"/>
        </authorList>
    </citation>
    <scope>NUCLEOTIDE SEQUENCE [LARGE SCALE MRNA]</scope>
    <source>
        <strain>Hereford</strain>
        <tissue>Kidney</tissue>
    </source>
</reference>
<proteinExistence type="evidence at transcript level"/>
<evidence type="ECO:0000250" key="1"/>
<evidence type="ECO:0000250" key="2">
    <source>
        <dbReference type="UniProtKB" id="O95478"/>
    </source>
</evidence>
<evidence type="ECO:0000255" key="3">
    <source>
        <dbReference type="PROSITE-ProRule" id="PRU00768"/>
    </source>
</evidence>
<evidence type="ECO:0000256" key="4">
    <source>
        <dbReference type="SAM" id="MobiDB-lite"/>
    </source>
</evidence>
<evidence type="ECO:0000305" key="5"/>